<gene>
    <name evidence="1" type="primary">gmhA</name>
    <name type="ordered locus">CA_C3054</name>
</gene>
<accession>Q97EQ4</accession>
<comment type="function">
    <text evidence="1">Catalyzes the isomerization of sedoheptulose 7-phosphate in D-glycero-D-manno-heptose 7-phosphate.</text>
</comment>
<comment type="catalytic activity">
    <reaction evidence="1">
        <text>2 D-sedoheptulose 7-phosphate = D-glycero-alpha-D-manno-heptose 7-phosphate + D-glycero-beta-D-manno-heptose 7-phosphate</text>
        <dbReference type="Rhea" id="RHEA:27489"/>
        <dbReference type="ChEBI" id="CHEBI:57483"/>
        <dbReference type="ChEBI" id="CHEBI:60203"/>
        <dbReference type="ChEBI" id="CHEBI:60204"/>
        <dbReference type="EC" id="5.3.1.28"/>
    </reaction>
</comment>
<comment type="cofactor">
    <cofactor evidence="1">
        <name>Zn(2+)</name>
        <dbReference type="ChEBI" id="CHEBI:29105"/>
    </cofactor>
    <text evidence="1">Binds 1 zinc ion per subunit.</text>
</comment>
<comment type="pathway">
    <text evidence="1">Carbohydrate biosynthesis; D-glycero-D-manno-heptose 7-phosphate biosynthesis; D-glycero-alpha-D-manno-heptose 7-phosphate and D-glycero-beta-D-manno-heptose 7-phosphate from sedoheptulose 7-phosphate: step 1/1.</text>
</comment>
<comment type="subcellular location">
    <subcellularLocation>
        <location evidence="1">Cytoplasm</location>
    </subcellularLocation>
</comment>
<comment type="miscellaneous">
    <text evidence="1">The reaction produces a racemic mixture of D-glycero-alpha-D-manno-heptose 7-phosphate and D-glycero-beta-D-manno-heptose 7-phosphate.</text>
</comment>
<comment type="miscellaneous">
    <text>Is probably involved in the capsular polysaccharide (CPS) biosynthesis.</text>
</comment>
<comment type="similarity">
    <text evidence="1">Belongs to the SIS family. GmhA subfamily.</text>
</comment>
<reference key="1">
    <citation type="journal article" date="2001" name="J. Bacteriol.">
        <title>Genome sequence and comparative analysis of the solvent-producing bacterium Clostridium acetobutylicum.</title>
        <authorList>
            <person name="Noelling J."/>
            <person name="Breton G."/>
            <person name="Omelchenko M.V."/>
            <person name="Makarova K.S."/>
            <person name="Zeng Q."/>
            <person name="Gibson R."/>
            <person name="Lee H.M."/>
            <person name="Dubois J."/>
            <person name="Qiu D."/>
            <person name="Hitti J."/>
            <person name="Wolf Y.I."/>
            <person name="Tatusov R.L."/>
            <person name="Sabathe F."/>
            <person name="Doucette-Stamm L.A."/>
            <person name="Soucaille P."/>
            <person name="Daly M.J."/>
            <person name="Bennett G.N."/>
            <person name="Koonin E.V."/>
            <person name="Smith D.R."/>
        </authorList>
    </citation>
    <scope>NUCLEOTIDE SEQUENCE [LARGE SCALE GENOMIC DNA]</scope>
    <source>
        <strain>ATCC 824 / DSM 792 / JCM 1419 / IAM 19013 / LMG 5710 / NBRC 13948 / NRRL B-527 / VKM B-1787 / 2291 / W</strain>
    </source>
</reference>
<reference key="2">
    <citation type="journal article" date="2002" name="Microbiology">
        <title>Novel pathways for biosynthesis of nucleotide-activated glycero-manno-heptose precursors of bacterial glycoproteins and cell surface polysaccharides.</title>
        <authorList>
            <person name="Valvano M.A."/>
            <person name="Messner P."/>
            <person name="Kosma P."/>
        </authorList>
    </citation>
    <scope>BIOSYNTHESIS OF NUCLEOTIDE-ACTIVATED GLYCERO-MANNO-HEPTOSE</scope>
</reference>
<protein>
    <recommendedName>
        <fullName evidence="1">Phosphoheptose isomerase</fullName>
        <ecNumber evidence="1">5.3.1.28</ecNumber>
    </recommendedName>
    <alternativeName>
        <fullName evidence="1">Sedoheptulose 7-phosphate isomerase</fullName>
    </alternativeName>
</protein>
<sequence length="196" mass="21499">MKNFIEAQIKSSIEAKEKILKDGQYIEQIQSIVEIVIQAYKLGKKVLLCGNGGSAADSQHIAAEFVSKFRLDRKALPAIALTVNTSVLTSIGNDYSYKNIFERQVEAFGKEGDVLIGISTSGNSENITLAFKKAKEIGITTIGFLGKDGGENKNYCDFPLIVPSEDTPRVQEAHIMIGHIVCDIVEKELFGEKVDE</sequence>
<name>GMHA_CLOAB</name>
<dbReference type="EC" id="5.3.1.28" evidence="1"/>
<dbReference type="EMBL" id="AE001437">
    <property type="protein sequence ID" value="AAK80994.1"/>
    <property type="molecule type" value="Genomic_DNA"/>
</dbReference>
<dbReference type="PIR" id="G97275">
    <property type="entry name" value="G97275"/>
</dbReference>
<dbReference type="RefSeq" id="NP_349654.1">
    <property type="nucleotide sequence ID" value="NC_003030.1"/>
</dbReference>
<dbReference type="RefSeq" id="WP_010966335.1">
    <property type="nucleotide sequence ID" value="NC_003030.1"/>
</dbReference>
<dbReference type="SMR" id="Q97EQ4"/>
<dbReference type="STRING" id="272562.CA_C3054"/>
<dbReference type="KEGG" id="cac:CA_C3054"/>
<dbReference type="PATRIC" id="fig|272562.8.peg.3237"/>
<dbReference type="eggNOG" id="COG0279">
    <property type="taxonomic scope" value="Bacteria"/>
</dbReference>
<dbReference type="HOGENOM" id="CLU_080999_4_0_9"/>
<dbReference type="OrthoDB" id="9781311at2"/>
<dbReference type="BRENDA" id="5.3.1.28">
    <property type="organism ID" value="1452"/>
</dbReference>
<dbReference type="UniPathway" id="UPA00041">
    <property type="reaction ID" value="UER00436"/>
</dbReference>
<dbReference type="Proteomes" id="UP000000814">
    <property type="component" value="Chromosome"/>
</dbReference>
<dbReference type="GO" id="GO:0005737">
    <property type="term" value="C:cytoplasm"/>
    <property type="evidence" value="ECO:0007669"/>
    <property type="project" value="UniProtKB-SubCell"/>
</dbReference>
<dbReference type="GO" id="GO:0097367">
    <property type="term" value="F:carbohydrate derivative binding"/>
    <property type="evidence" value="ECO:0007669"/>
    <property type="project" value="InterPro"/>
</dbReference>
<dbReference type="GO" id="GO:0008968">
    <property type="term" value="F:D-sedoheptulose 7-phosphate isomerase activity"/>
    <property type="evidence" value="ECO:0007669"/>
    <property type="project" value="UniProtKB-UniRule"/>
</dbReference>
<dbReference type="GO" id="GO:0008270">
    <property type="term" value="F:zinc ion binding"/>
    <property type="evidence" value="ECO:0007669"/>
    <property type="project" value="UniProtKB-UniRule"/>
</dbReference>
<dbReference type="GO" id="GO:0005975">
    <property type="term" value="P:carbohydrate metabolic process"/>
    <property type="evidence" value="ECO:0007669"/>
    <property type="project" value="UniProtKB-UniRule"/>
</dbReference>
<dbReference type="GO" id="GO:2001061">
    <property type="term" value="P:D-glycero-D-manno-heptose 7-phosphate biosynthetic process"/>
    <property type="evidence" value="ECO:0007669"/>
    <property type="project" value="UniProtKB-UniPathway"/>
</dbReference>
<dbReference type="CDD" id="cd05006">
    <property type="entry name" value="SIS_GmhA"/>
    <property type="match status" value="1"/>
</dbReference>
<dbReference type="Gene3D" id="3.40.50.10490">
    <property type="entry name" value="Glucose-6-phosphate isomerase like protein, domain 1"/>
    <property type="match status" value="1"/>
</dbReference>
<dbReference type="HAMAP" id="MF_00067">
    <property type="entry name" value="GmhA"/>
    <property type="match status" value="1"/>
</dbReference>
<dbReference type="InterPro" id="IPR035461">
    <property type="entry name" value="GmhA/DiaA"/>
</dbReference>
<dbReference type="InterPro" id="IPR004515">
    <property type="entry name" value="Phosphoheptose_Isoase"/>
</dbReference>
<dbReference type="InterPro" id="IPR001347">
    <property type="entry name" value="SIS_dom"/>
</dbReference>
<dbReference type="InterPro" id="IPR046348">
    <property type="entry name" value="SIS_dom_sf"/>
</dbReference>
<dbReference type="InterPro" id="IPR050099">
    <property type="entry name" value="SIS_GmhA/DiaA_subfam"/>
</dbReference>
<dbReference type="PANTHER" id="PTHR30390:SF6">
    <property type="entry name" value="DNAA INITIATOR-ASSOCIATING PROTEIN DIAA"/>
    <property type="match status" value="1"/>
</dbReference>
<dbReference type="PANTHER" id="PTHR30390">
    <property type="entry name" value="SEDOHEPTULOSE 7-PHOSPHATE ISOMERASE / DNAA INITIATOR-ASSOCIATING FACTOR FOR REPLICATION INITIATION"/>
    <property type="match status" value="1"/>
</dbReference>
<dbReference type="Pfam" id="PF13580">
    <property type="entry name" value="SIS_2"/>
    <property type="match status" value="1"/>
</dbReference>
<dbReference type="SUPFAM" id="SSF53697">
    <property type="entry name" value="SIS domain"/>
    <property type="match status" value="1"/>
</dbReference>
<dbReference type="PROSITE" id="PS51464">
    <property type="entry name" value="SIS"/>
    <property type="match status" value="1"/>
</dbReference>
<organism>
    <name type="scientific">Clostridium acetobutylicum (strain ATCC 824 / DSM 792 / JCM 1419 / IAM 19013 / LMG 5710 / NBRC 13948 / NRRL B-527 / VKM B-1787 / 2291 / W)</name>
    <dbReference type="NCBI Taxonomy" id="272562"/>
    <lineage>
        <taxon>Bacteria</taxon>
        <taxon>Bacillati</taxon>
        <taxon>Bacillota</taxon>
        <taxon>Clostridia</taxon>
        <taxon>Eubacteriales</taxon>
        <taxon>Clostridiaceae</taxon>
        <taxon>Clostridium</taxon>
    </lineage>
</organism>
<feature type="chain" id="PRO_0000136525" description="Phosphoheptose isomerase">
    <location>
        <begin position="1"/>
        <end position="196"/>
    </location>
</feature>
<feature type="domain" description="SIS" evidence="1">
    <location>
        <begin position="36"/>
        <end position="195"/>
    </location>
</feature>
<feature type="binding site" evidence="1">
    <location>
        <begin position="51"/>
        <end position="53"/>
    </location>
    <ligand>
        <name>substrate</name>
    </ligand>
</feature>
<feature type="binding site" evidence="1">
    <location>
        <position position="60"/>
    </location>
    <ligand>
        <name>Zn(2+)</name>
        <dbReference type="ChEBI" id="CHEBI:29105"/>
    </ligand>
</feature>
<feature type="binding site" evidence="1">
    <location>
        <position position="64"/>
    </location>
    <ligand>
        <name>substrate</name>
    </ligand>
</feature>
<feature type="binding site" evidence="1">
    <location>
        <position position="64"/>
    </location>
    <ligand>
        <name>Zn(2+)</name>
        <dbReference type="ChEBI" id="CHEBI:29105"/>
    </ligand>
</feature>
<feature type="binding site" evidence="1">
    <location>
        <begin position="93"/>
        <end position="94"/>
    </location>
    <ligand>
        <name>substrate</name>
    </ligand>
</feature>
<feature type="binding site" evidence="1">
    <location>
        <begin position="119"/>
        <end position="121"/>
    </location>
    <ligand>
        <name>substrate</name>
    </ligand>
</feature>
<feature type="binding site" evidence="1">
    <location>
        <position position="124"/>
    </location>
    <ligand>
        <name>substrate</name>
    </ligand>
</feature>
<feature type="binding site" evidence="1">
    <location>
        <position position="171"/>
    </location>
    <ligand>
        <name>substrate</name>
    </ligand>
</feature>
<feature type="binding site" evidence="1">
    <location>
        <position position="171"/>
    </location>
    <ligand>
        <name>Zn(2+)</name>
        <dbReference type="ChEBI" id="CHEBI:29105"/>
    </ligand>
</feature>
<feature type="binding site" evidence="1">
    <location>
        <position position="179"/>
    </location>
    <ligand>
        <name>Zn(2+)</name>
        <dbReference type="ChEBI" id="CHEBI:29105"/>
    </ligand>
</feature>
<keyword id="KW-0972">Capsule biogenesis/degradation</keyword>
<keyword id="KW-0119">Carbohydrate metabolism</keyword>
<keyword id="KW-0963">Cytoplasm</keyword>
<keyword id="KW-0413">Isomerase</keyword>
<keyword id="KW-0479">Metal-binding</keyword>
<keyword id="KW-1185">Reference proteome</keyword>
<keyword id="KW-0862">Zinc</keyword>
<evidence type="ECO:0000255" key="1">
    <source>
        <dbReference type="HAMAP-Rule" id="MF_00067"/>
    </source>
</evidence>
<proteinExistence type="inferred from homology"/>